<name>RU17_DICDI</name>
<keyword id="KW-0175">Coiled coil</keyword>
<keyword id="KW-0507">mRNA processing</keyword>
<keyword id="KW-0539">Nucleus</keyword>
<keyword id="KW-1185">Reference proteome</keyword>
<keyword id="KW-0687">Ribonucleoprotein</keyword>
<keyword id="KW-0694">RNA-binding</keyword>
<dbReference type="EMBL" id="AAFI02000003">
    <property type="protein sequence ID" value="EAL73455.1"/>
    <property type="molecule type" value="Genomic_DNA"/>
</dbReference>
<dbReference type="RefSeq" id="XP_647483.1">
    <property type="nucleotide sequence ID" value="XM_642391.1"/>
</dbReference>
<dbReference type="SMR" id="Q55FQ0"/>
<dbReference type="FunCoup" id="Q55FQ0">
    <property type="interactions" value="2"/>
</dbReference>
<dbReference type="STRING" id="44689.Q55FQ0"/>
<dbReference type="PaxDb" id="44689-DDB0233134"/>
<dbReference type="EnsemblProtists" id="EAL73455">
    <property type="protein sequence ID" value="EAL73455"/>
    <property type="gene ID" value="DDB_G0268004"/>
</dbReference>
<dbReference type="GeneID" id="8616290"/>
<dbReference type="KEGG" id="ddi:DDB_G0268004"/>
<dbReference type="dictyBase" id="DDB_G0268004">
    <property type="gene designation" value="snrp70"/>
</dbReference>
<dbReference type="VEuPathDB" id="AmoebaDB:DDB_G0268004"/>
<dbReference type="eggNOG" id="KOG0113">
    <property type="taxonomic scope" value="Eukaryota"/>
</dbReference>
<dbReference type="HOGENOM" id="CLU_596458_0_0_1"/>
<dbReference type="InParanoid" id="Q55FQ0"/>
<dbReference type="OMA" id="FIEYQHK"/>
<dbReference type="PRO" id="PR:Q55FQ0"/>
<dbReference type="Proteomes" id="UP000002195">
    <property type="component" value="Chromosome 1"/>
</dbReference>
<dbReference type="GO" id="GO:0005681">
    <property type="term" value="C:spliceosomal complex"/>
    <property type="evidence" value="ECO:0000250"/>
    <property type="project" value="UniProtKB"/>
</dbReference>
<dbReference type="GO" id="GO:0005685">
    <property type="term" value="C:U1 snRNP"/>
    <property type="evidence" value="ECO:0000250"/>
    <property type="project" value="UniProtKB"/>
</dbReference>
<dbReference type="GO" id="GO:0071004">
    <property type="term" value="C:U2-type prespliceosome"/>
    <property type="evidence" value="ECO:0000318"/>
    <property type="project" value="GO_Central"/>
</dbReference>
<dbReference type="GO" id="GO:0003729">
    <property type="term" value="F:mRNA binding"/>
    <property type="evidence" value="ECO:0000318"/>
    <property type="project" value="GO_Central"/>
</dbReference>
<dbReference type="GO" id="GO:0003723">
    <property type="term" value="F:RNA binding"/>
    <property type="evidence" value="ECO:0000250"/>
    <property type="project" value="UniProtKB"/>
</dbReference>
<dbReference type="GO" id="GO:0030619">
    <property type="term" value="F:U1 snRNA binding"/>
    <property type="evidence" value="ECO:0000318"/>
    <property type="project" value="GO_Central"/>
</dbReference>
<dbReference type="GO" id="GO:0000398">
    <property type="term" value="P:mRNA splicing, via spliceosome"/>
    <property type="evidence" value="ECO:0000250"/>
    <property type="project" value="UniProtKB"/>
</dbReference>
<dbReference type="GO" id="GO:0043484">
    <property type="term" value="P:regulation of RNA splicing"/>
    <property type="evidence" value="ECO:0000250"/>
    <property type="project" value="UniProtKB"/>
</dbReference>
<dbReference type="GO" id="GO:0008380">
    <property type="term" value="P:RNA splicing"/>
    <property type="evidence" value="ECO:0000250"/>
    <property type="project" value="dictyBase"/>
</dbReference>
<dbReference type="CDD" id="cd12236">
    <property type="entry name" value="RRM_snRNP70"/>
    <property type="match status" value="1"/>
</dbReference>
<dbReference type="FunFam" id="3.30.70.330:FF:000132">
    <property type="entry name" value="Small nuclear ribonucleoprotein U11/U12 subunit 35"/>
    <property type="match status" value="1"/>
</dbReference>
<dbReference type="Gene3D" id="3.30.70.330">
    <property type="match status" value="1"/>
</dbReference>
<dbReference type="InterPro" id="IPR012677">
    <property type="entry name" value="Nucleotide-bd_a/b_plait_sf"/>
</dbReference>
<dbReference type="InterPro" id="IPR035979">
    <property type="entry name" value="RBD_domain_sf"/>
</dbReference>
<dbReference type="InterPro" id="IPR000504">
    <property type="entry name" value="RRM_dom"/>
</dbReference>
<dbReference type="InterPro" id="IPR034143">
    <property type="entry name" value="snRNP70_RRM"/>
</dbReference>
<dbReference type="InterPro" id="IPR051183">
    <property type="entry name" value="U1_U11-U12_snRNP_70-35kDa"/>
</dbReference>
<dbReference type="InterPro" id="IPR022023">
    <property type="entry name" value="U1snRNP70_N"/>
</dbReference>
<dbReference type="PANTHER" id="PTHR13952">
    <property type="entry name" value="U1 SMALL NUCLEAR RIBONUCLEOPROTEIN 70 KD"/>
    <property type="match status" value="1"/>
</dbReference>
<dbReference type="PANTHER" id="PTHR13952:SF5">
    <property type="entry name" value="U1 SMALL NUCLEAR RIBONUCLEOPROTEIN 70 KDA"/>
    <property type="match status" value="1"/>
</dbReference>
<dbReference type="Pfam" id="PF00076">
    <property type="entry name" value="RRM_1"/>
    <property type="match status" value="1"/>
</dbReference>
<dbReference type="Pfam" id="PF12220">
    <property type="entry name" value="U1snRNP70_N"/>
    <property type="match status" value="1"/>
</dbReference>
<dbReference type="SMART" id="SM00360">
    <property type="entry name" value="RRM"/>
    <property type="match status" value="1"/>
</dbReference>
<dbReference type="SUPFAM" id="SSF54928">
    <property type="entry name" value="RNA-binding domain, RBD"/>
    <property type="match status" value="1"/>
</dbReference>
<dbReference type="PROSITE" id="PS50102">
    <property type="entry name" value="RRM"/>
    <property type="match status" value="1"/>
</dbReference>
<evidence type="ECO:0000250" key="1"/>
<evidence type="ECO:0000255" key="2">
    <source>
        <dbReference type="PROSITE-ProRule" id="PRU00176"/>
    </source>
</evidence>
<evidence type="ECO:0000256" key="3">
    <source>
        <dbReference type="SAM" id="MobiDB-lite"/>
    </source>
</evidence>
<feature type="chain" id="PRO_0000327475" description="U1 small nuclear ribonucleoprotein 70 kDa">
    <location>
        <begin position="1"/>
        <end position="459"/>
    </location>
</feature>
<feature type="domain" description="RRM" evidence="2">
    <location>
        <begin position="99"/>
        <end position="178"/>
    </location>
</feature>
<feature type="region of interest" description="Disordered" evidence="3">
    <location>
        <begin position="185"/>
        <end position="459"/>
    </location>
</feature>
<feature type="compositionally biased region" description="Basic and acidic residues" evidence="3">
    <location>
        <begin position="211"/>
        <end position="241"/>
    </location>
</feature>
<feature type="compositionally biased region" description="Low complexity" evidence="3">
    <location>
        <begin position="242"/>
        <end position="254"/>
    </location>
</feature>
<feature type="compositionally biased region" description="Basic and acidic residues" evidence="3">
    <location>
        <begin position="263"/>
        <end position="408"/>
    </location>
</feature>
<feature type="compositionally biased region" description="Basic residues" evidence="3">
    <location>
        <begin position="426"/>
        <end position="440"/>
    </location>
</feature>
<accession>Q55FQ0</accession>
<reference key="1">
    <citation type="journal article" date="2005" name="Nature">
        <title>The genome of the social amoeba Dictyostelium discoideum.</title>
        <authorList>
            <person name="Eichinger L."/>
            <person name="Pachebat J.A."/>
            <person name="Gloeckner G."/>
            <person name="Rajandream M.A."/>
            <person name="Sucgang R."/>
            <person name="Berriman M."/>
            <person name="Song J."/>
            <person name="Olsen R."/>
            <person name="Szafranski K."/>
            <person name="Xu Q."/>
            <person name="Tunggal B."/>
            <person name="Kummerfeld S."/>
            <person name="Madera M."/>
            <person name="Konfortov B.A."/>
            <person name="Rivero F."/>
            <person name="Bankier A.T."/>
            <person name="Lehmann R."/>
            <person name="Hamlin N."/>
            <person name="Davies R."/>
            <person name="Gaudet P."/>
            <person name="Fey P."/>
            <person name="Pilcher K."/>
            <person name="Chen G."/>
            <person name="Saunders D."/>
            <person name="Sodergren E.J."/>
            <person name="Davis P."/>
            <person name="Kerhornou A."/>
            <person name="Nie X."/>
            <person name="Hall N."/>
            <person name="Anjard C."/>
            <person name="Hemphill L."/>
            <person name="Bason N."/>
            <person name="Farbrother P."/>
            <person name="Desany B."/>
            <person name="Just E."/>
            <person name="Morio T."/>
            <person name="Rost R."/>
            <person name="Churcher C.M."/>
            <person name="Cooper J."/>
            <person name="Haydock S."/>
            <person name="van Driessche N."/>
            <person name="Cronin A."/>
            <person name="Goodhead I."/>
            <person name="Muzny D.M."/>
            <person name="Mourier T."/>
            <person name="Pain A."/>
            <person name="Lu M."/>
            <person name="Harper D."/>
            <person name="Lindsay R."/>
            <person name="Hauser H."/>
            <person name="James K.D."/>
            <person name="Quiles M."/>
            <person name="Madan Babu M."/>
            <person name="Saito T."/>
            <person name="Buchrieser C."/>
            <person name="Wardroper A."/>
            <person name="Felder M."/>
            <person name="Thangavelu M."/>
            <person name="Johnson D."/>
            <person name="Knights A."/>
            <person name="Loulseged H."/>
            <person name="Mungall K.L."/>
            <person name="Oliver K."/>
            <person name="Price C."/>
            <person name="Quail M.A."/>
            <person name="Urushihara H."/>
            <person name="Hernandez J."/>
            <person name="Rabbinowitsch E."/>
            <person name="Steffen D."/>
            <person name="Sanders M."/>
            <person name="Ma J."/>
            <person name="Kohara Y."/>
            <person name="Sharp S."/>
            <person name="Simmonds M.N."/>
            <person name="Spiegler S."/>
            <person name="Tivey A."/>
            <person name="Sugano S."/>
            <person name="White B."/>
            <person name="Walker D."/>
            <person name="Woodward J.R."/>
            <person name="Winckler T."/>
            <person name="Tanaka Y."/>
            <person name="Shaulsky G."/>
            <person name="Schleicher M."/>
            <person name="Weinstock G.M."/>
            <person name="Rosenthal A."/>
            <person name="Cox E.C."/>
            <person name="Chisholm R.L."/>
            <person name="Gibbs R.A."/>
            <person name="Loomis W.F."/>
            <person name="Platzer M."/>
            <person name="Kay R.R."/>
            <person name="Williams J.G."/>
            <person name="Dear P.H."/>
            <person name="Noegel A.A."/>
            <person name="Barrell B.G."/>
            <person name="Kuspa A."/>
        </authorList>
    </citation>
    <scope>NUCLEOTIDE SEQUENCE [LARGE SCALE GENOMIC DNA]</scope>
    <source>
        <strain>AX4</strain>
    </source>
</reference>
<organism>
    <name type="scientific">Dictyostelium discoideum</name>
    <name type="common">Social amoeba</name>
    <dbReference type="NCBI Taxonomy" id="44689"/>
    <lineage>
        <taxon>Eukaryota</taxon>
        <taxon>Amoebozoa</taxon>
        <taxon>Evosea</taxon>
        <taxon>Eumycetozoa</taxon>
        <taxon>Dictyostelia</taxon>
        <taxon>Dictyosteliales</taxon>
        <taxon>Dictyosteliaceae</taxon>
        <taxon>Dictyostelium</taxon>
    </lineage>
</organism>
<gene>
    <name type="primary">snrnp70</name>
    <name type="synonym">snrp70</name>
    <name type="ORF">DDB_G0268004</name>
</gene>
<sequence length="459" mass="53436">MAFLPPNLKIMFNPRHPPPFLPPPPPSNLPPYTGLRDYLSIFTDPSNEEPFKKEHIENLEEKREKKRKLKISENDERISKSLKAWDPYSNSETTGDPYKTIFVSRISYKTTQQKLEFEFGQFGPIKSLFLVKDSNNPEKHTGYAFIEFERERDMKAAYKQADGMKIDDRRIVVDIERGRVIKNWKPRKFGGGLGNTRAGGVDVNQTFSGREMSESREKEKEREKEKEKEKERMEKMKKRDGGLSSNGNRSNGISSGSGGSGGDRGDRGDRDRGDRGDRSDRSDRDRERGRGDRDHRGSGGERERERDQRDRGGDRGGDRGDRSDRGRSDRGDRGDRSDRGRDDRERGRDDRGDRGRDDRRGGSDRDRDRGSRDDRGDRDDRSDRGRDDRRGGSDRDHRIDERRRDQRDYGSISDAHFDHFQYQPQQHHHHQQNHQSHHNQPHPERVNRDYSMISNENGF</sequence>
<protein>
    <recommendedName>
        <fullName>U1 small nuclear ribonucleoprotein 70 kDa</fullName>
        <shortName>U1 snRNP 70 kDa</shortName>
        <shortName>U1-70K</shortName>
        <shortName>snRNP70</shortName>
    </recommendedName>
</protein>
<proteinExistence type="inferred from homology"/>
<comment type="function">
    <text evidence="1">Mediates the splicing of pre-mRNA by binding to the stem loop I region of U1-snRNA.</text>
</comment>
<comment type="subcellular location">
    <subcellularLocation>
        <location evidence="1">Nucleus</location>
    </subcellularLocation>
</comment>